<keyword id="KW-0150">Chloroplast</keyword>
<keyword id="KW-0903">Direct protein sequencing</keyword>
<keyword id="KW-0472">Membrane</keyword>
<keyword id="KW-0489">Methyltransferase</keyword>
<keyword id="KW-0934">Plastid</keyword>
<keyword id="KW-1001">Plastid inner membrane</keyword>
<keyword id="KW-1185">Reference proteome</keyword>
<keyword id="KW-0949">S-adenosyl-L-methionine</keyword>
<keyword id="KW-0808">Transferase</keyword>
<keyword id="KW-0809">Transit peptide</keyword>
<keyword id="KW-0812">Transmembrane</keyword>
<keyword id="KW-1133">Transmembrane helix</keyword>
<comment type="function">
    <text evidence="1">Involved in a key methylation step in both tocopherols (vitamin E) and plastoquinone synthesis. Catalyzes the conversion of 2-methyl-6-phytyl-1,4-hydroquinone (MPBQ) to 2,3-dimethyl-6-phytyl-1,4-hydroquinone (DMPQ, a substrate for tocopherol cyclase), and 2-methyl-6-solanyl-1,4-benzoquinone (MSBQ) to plastoquinone (By similarity).</text>
</comment>
<comment type="catalytic activity">
    <reaction>
        <text>2-methyl-6-phytyl-1,4-benzene-1,4-diol + S-adenosyl-L-methionine = 2,3-dimethyl-6-phytylbenzene-1,4-diol + S-adenosyl-L-homocysteine + H(+)</text>
        <dbReference type="Rhea" id="RHEA:37979"/>
        <dbReference type="ChEBI" id="CHEBI:15378"/>
        <dbReference type="ChEBI" id="CHEBI:57856"/>
        <dbReference type="ChEBI" id="CHEBI:59789"/>
        <dbReference type="ChEBI" id="CHEBI:75920"/>
        <dbReference type="ChEBI" id="CHEBI:75921"/>
        <dbReference type="EC" id="2.1.1.295"/>
    </reaction>
</comment>
<comment type="catalytic activity">
    <reaction>
        <text>2-methyl-6-(all-trans-nonaprenyl)benzene-1,4-diol + S-adenosyl-L-methionine = plastoquinol-9 + S-adenosyl-L-homocysteine + H(+)</text>
        <dbReference type="Rhea" id="RHEA:37999"/>
        <dbReference type="ChEBI" id="CHEBI:15378"/>
        <dbReference type="ChEBI" id="CHEBI:28026"/>
        <dbReference type="ChEBI" id="CHEBI:57856"/>
        <dbReference type="ChEBI" id="CHEBI:59789"/>
        <dbReference type="ChEBI" id="CHEBI:75402"/>
        <dbReference type="EC" id="2.1.1.295"/>
    </reaction>
</comment>
<comment type="catalytic activity">
    <reaction>
        <text>6-geranylgeranyl-2-methylbenzene-1,4-diol + S-adenosyl-L-methionine = 6-geranylgeranyl-2,3-dimethylbenzene-1,4-diol + S-adenosyl-L-homocysteine + H(+)</text>
        <dbReference type="Rhea" id="RHEA:38007"/>
        <dbReference type="ChEBI" id="CHEBI:15378"/>
        <dbReference type="ChEBI" id="CHEBI:57856"/>
        <dbReference type="ChEBI" id="CHEBI:59789"/>
        <dbReference type="ChEBI" id="CHEBI:75411"/>
        <dbReference type="ChEBI" id="CHEBI:75412"/>
        <dbReference type="EC" id="2.1.1.295"/>
    </reaction>
</comment>
<comment type="pathway">
    <text>Cofactor biosynthesis; tocopherol biosynthesis.</text>
</comment>
<comment type="subcellular location">
    <subcellularLocation>
        <location evidence="4">Plastid</location>
        <location evidence="4">Chloroplast inner membrane</location>
        <topology evidence="4">Single-pass membrane protein</topology>
    </subcellularLocation>
</comment>
<comment type="similarity">
    <text evidence="3">Belongs to the class I-like SAM-binding methyltransferase superfamily. MPBQ/MBSQ MT family.</text>
</comment>
<sequence length="344" mass="38976">MACSMLNGVDKLALISGKTPNRLRFSGSDFTGSYKLPRLNLPPNSRNLRAKTLTTVTKCTLSASERPASQPRFIQNKQEAFWFYRFLSIVYDNIINPGHWTEDMRDVALEPADLNNRNMLVVDVGGGTGFTTLGIIKHVDPKNVTILDQSPHQLAKAKAKKPLKECRIIEGDAEDLPFPTDYADRYVSAGSIEYWPDPQRGIREAYRVLKLGGKACLIGPVYPTFWLSRFFADVWMLFPKEEEYIEWFQKAGFKDVQLKRIGPKWYRGVRRHGLIMGCSVTGVKPASGDSPLQLGPKVEDVQKPVHPLVFLYRFLLGALASTYYVLVPIYMWIKDKIFPKGMPL</sequence>
<protein>
    <recommendedName>
        <fullName>2-methyl-6-phytyl-1,4-hydroquinone methyltransferase, chloroplastic</fullName>
        <ecNumber>2.1.1.295</ecNumber>
    </recommendedName>
    <alternativeName>
        <fullName>37 kDa inner envelope membrane protein</fullName>
        <shortName>E37</shortName>
    </alternativeName>
    <alternativeName>
        <fullName>MPBQ/MSBQ methyltransferase</fullName>
    </alternativeName>
</protein>
<dbReference type="EC" id="2.1.1.295"/>
<dbReference type="EMBL" id="X56963">
    <property type="protein sequence ID" value="CAA40283.1"/>
    <property type="molecule type" value="mRNA"/>
</dbReference>
<dbReference type="PIR" id="S14409">
    <property type="entry name" value="S14409"/>
</dbReference>
<dbReference type="SMR" id="P23525"/>
<dbReference type="UniPathway" id="UPA00160"/>
<dbReference type="Proteomes" id="UP001155700">
    <property type="component" value="Unplaced"/>
</dbReference>
<dbReference type="GO" id="GO:0009706">
    <property type="term" value="C:chloroplast inner membrane"/>
    <property type="evidence" value="ECO:0007669"/>
    <property type="project" value="UniProtKB-SubCell"/>
</dbReference>
<dbReference type="GO" id="GO:0102550">
    <property type="term" value="F:2-methyl-6-geranylgeranyl-1,4-benzoquinol methyltransferase activity"/>
    <property type="evidence" value="ECO:0007669"/>
    <property type="project" value="UniProtKB-EC"/>
</dbReference>
<dbReference type="GO" id="GO:0051741">
    <property type="term" value="F:2-methyl-6-phytyl-1,4-benzoquinone methyltransferase activity"/>
    <property type="evidence" value="ECO:0007669"/>
    <property type="project" value="InterPro"/>
</dbReference>
<dbReference type="GO" id="GO:0051742">
    <property type="term" value="F:2-methyl-6-solanyl-1,4-benzoquinone methyltransferase activity"/>
    <property type="evidence" value="ECO:0007669"/>
    <property type="project" value="RHEA"/>
</dbReference>
<dbReference type="GO" id="GO:0032259">
    <property type="term" value="P:methylation"/>
    <property type="evidence" value="ECO:0007669"/>
    <property type="project" value="UniProtKB-KW"/>
</dbReference>
<dbReference type="GO" id="GO:0010189">
    <property type="term" value="P:vitamin E biosynthetic process"/>
    <property type="evidence" value="ECO:0007669"/>
    <property type="project" value="UniProtKB-UniPathway"/>
</dbReference>
<dbReference type="CDD" id="cd02440">
    <property type="entry name" value="AdoMet_MTases"/>
    <property type="match status" value="1"/>
</dbReference>
<dbReference type="Gene3D" id="3.40.50.150">
    <property type="entry name" value="Vaccinia Virus protein VP39"/>
    <property type="match status" value="1"/>
</dbReference>
<dbReference type="InterPro" id="IPR013216">
    <property type="entry name" value="Methyltransf_11"/>
</dbReference>
<dbReference type="InterPro" id="IPR044649">
    <property type="entry name" value="MPBQ/MSBQ_MT"/>
</dbReference>
<dbReference type="InterPro" id="IPR029063">
    <property type="entry name" value="SAM-dependent_MTases_sf"/>
</dbReference>
<dbReference type="InterPro" id="IPR031164">
    <property type="entry name" value="SAM_MPBQ_MSBQ_MT"/>
</dbReference>
<dbReference type="PANTHER" id="PTHR44516">
    <property type="entry name" value="2-METHYL-6-PHYTYL-1,4-HYDROQUINONE METHYLTRANSFERASE, CHLOROPLASTIC"/>
    <property type="match status" value="1"/>
</dbReference>
<dbReference type="PANTHER" id="PTHR44516:SF4">
    <property type="entry name" value="2-METHYL-6-PHYTYL-1,4-HYDROQUINONE METHYLTRANSFERASE, CHLOROPLASTIC"/>
    <property type="match status" value="1"/>
</dbReference>
<dbReference type="Pfam" id="PF08241">
    <property type="entry name" value="Methyltransf_11"/>
    <property type="match status" value="1"/>
</dbReference>
<dbReference type="SUPFAM" id="SSF53335">
    <property type="entry name" value="S-adenosyl-L-methionine-dependent methyltransferases"/>
    <property type="match status" value="1"/>
</dbReference>
<dbReference type="PROSITE" id="PS51734">
    <property type="entry name" value="SAM_MPBQ_MSBQ_MT"/>
    <property type="match status" value="1"/>
</dbReference>
<name>IN37_SPIOL</name>
<reference key="1">
    <citation type="journal article" date="1991" name="Eur. J. Biochem.">
        <title>cDNA sequence and deduced amino acid sequence of the precursor of the 37-kDa inner envelope membrane polypeptide from spinach chloroplasts. Its transit peptide contains an amphiphilic alpha-helix as the only detectable structural element.</title>
        <authorList>
            <person name="Dreses-Werringloer U."/>
            <person name="Fischer K."/>
            <person name="Wachter E."/>
            <person name="Link T.A."/>
            <person name="Fluegge U.J."/>
        </authorList>
    </citation>
    <scope>NUCLEOTIDE SEQUENCE [MRNA]</scope>
</reference>
<reference key="2">
    <citation type="journal article" date="1991" name="FEBS Lett.">
        <title>Purification and characterization of E37, a major chloroplast envelope protein.</title>
        <authorList>
            <person name="Block M.A."/>
            <person name="Joyard J."/>
            <person name="Douce R."/>
        </authorList>
    </citation>
    <scope>PROTEIN SEQUENCE OF 120-141 AND 236-240</scope>
    <scope>SUBCELLULAR LOCATION</scope>
</reference>
<accession>P23525</accession>
<proteinExistence type="evidence at protein level"/>
<organism>
    <name type="scientific">Spinacia oleracea</name>
    <name type="common">Spinach</name>
    <dbReference type="NCBI Taxonomy" id="3562"/>
    <lineage>
        <taxon>Eukaryota</taxon>
        <taxon>Viridiplantae</taxon>
        <taxon>Streptophyta</taxon>
        <taxon>Embryophyta</taxon>
        <taxon>Tracheophyta</taxon>
        <taxon>Spermatophyta</taxon>
        <taxon>Magnoliopsida</taxon>
        <taxon>eudicotyledons</taxon>
        <taxon>Gunneridae</taxon>
        <taxon>Pentapetalae</taxon>
        <taxon>Caryophyllales</taxon>
        <taxon>Chenopodiaceae</taxon>
        <taxon>Chenopodioideae</taxon>
        <taxon>Anserineae</taxon>
        <taxon>Spinacia</taxon>
    </lineage>
</organism>
<evidence type="ECO:0000250" key="1"/>
<evidence type="ECO:0000255" key="2"/>
<evidence type="ECO:0000255" key="3">
    <source>
        <dbReference type="PROSITE-ProRule" id="PRU01069"/>
    </source>
</evidence>
<evidence type="ECO:0000305" key="4">
    <source>
    </source>
</evidence>
<feature type="transit peptide" description="Chloroplast">
    <location>
        <begin position="1"/>
        <end position="62"/>
    </location>
</feature>
<feature type="chain" id="PRO_0000021513" description="2-methyl-6-phytyl-1,4-hydroquinone methyltransferase, chloroplastic">
    <location>
        <begin position="63"/>
        <end position="344"/>
    </location>
</feature>
<feature type="topological domain" description="Chloroplast intermembrane" evidence="2">
    <location>
        <begin position="63"/>
        <end position="313"/>
    </location>
</feature>
<feature type="transmembrane region" description="Helical" evidence="2">
    <location>
        <begin position="314"/>
        <end position="334"/>
    </location>
</feature>
<feature type="topological domain" description="Stromal" evidence="2">
    <location>
        <begin position="335"/>
        <end position="344"/>
    </location>
</feature>
<feature type="region of interest" description="SAM motif I" evidence="3">
    <location>
        <begin position="121"/>
        <end position="130"/>
    </location>
</feature>
<feature type="region of interest" description="SAM motif II" evidence="3">
    <location>
        <begin position="166"/>
        <end position="179"/>
    </location>
</feature>
<feature type="region of interest" description="SAM motif III" evidence="3">
    <location>
        <begin position="207"/>
        <end position="220"/>
    </location>
</feature>